<accession>F4IUJ7</accession>
<organism>
    <name type="scientific">Arabidopsis thaliana</name>
    <name type="common">Mouse-ear cress</name>
    <dbReference type="NCBI Taxonomy" id="3702"/>
    <lineage>
        <taxon>Eukaryota</taxon>
        <taxon>Viridiplantae</taxon>
        <taxon>Streptophyta</taxon>
        <taxon>Embryophyta</taxon>
        <taxon>Tracheophyta</taxon>
        <taxon>Spermatophyta</taxon>
        <taxon>Magnoliopsida</taxon>
        <taxon>eudicotyledons</taxon>
        <taxon>Gunneridae</taxon>
        <taxon>Pentapetalae</taxon>
        <taxon>rosids</taxon>
        <taxon>malvids</taxon>
        <taxon>Brassicales</taxon>
        <taxon>Brassicaceae</taxon>
        <taxon>Camelineae</taxon>
        <taxon>Arabidopsis</taxon>
    </lineage>
</organism>
<comment type="function">
    <text evidence="1">May be involved in cooperative interactions with calmodulins or calmodulin-like proteins (By similarity). Recruits calmodulin proteins to microtubules, thus being a potential scaffold in cellular signaling and trafficking (By similarity). May associate with nucleic acids and regulate gene expression at the transcriptional or post-transcriptional level (By similarity).</text>
</comment>
<comment type="subunit">
    <text evidence="1">Binds to multiple calmodulin (CaM) in the presence of Ca(2+) and CaM-like proteins.</text>
</comment>
<comment type="subcellular location">
    <subcellularLocation>
        <location evidence="3">Nucleus</location>
    </subcellularLocation>
    <subcellularLocation>
        <location evidence="5">Nucleus</location>
        <location evidence="5">Nucleolus</location>
    </subcellularLocation>
</comment>
<comment type="similarity">
    <text evidence="7">Belongs to the IQD family.</text>
</comment>
<gene>
    <name evidence="6" type="primary">IQD4</name>
    <name evidence="8" type="ordered locus">At2g26410</name>
    <name evidence="9" type="ORF">T9J22.8</name>
</gene>
<dbReference type="EMBL" id="AC002505">
    <property type="status" value="NOT_ANNOTATED_CDS"/>
    <property type="molecule type" value="Genomic_DNA"/>
</dbReference>
<dbReference type="EMBL" id="CP002685">
    <property type="protein sequence ID" value="AEC07834.1"/>
    <property type="molecule type" value="Genomic_DNA"/>
</dbReference>
<dbReference type="EMBL" id="CP002685">
    <property type="protein sequence ID" value="ANM63182.1"/>
    <property type="molecule type" value="Genomic_DNA"/>
</dbReference>
<dbReference type="RefSeq" id="NP_001325287.1">
    <property type="nucleotide sequence ID" value="NM_001336066.1"/>
</dbReference>
<dbReference type="RefSeq" id="NP_180209.4">
    <property type="nucleotide sequence ID" value="NM_128198.5"/>
</dbReference>
<dbReference type="SMR" id="F4IUJ7"/>
<dbReference type="STRING" id="3702.F4IUJ7"/>
<dbReference type="iPTMnet" id="F4IUJ7"/>
<dbReference type="PaxDb" id="3702-AT2G26410.1"/>
<dbReference type="ProteomicsDB" id="175605"/>
<dbReference type="EnsemblPlants" id="AT2G26410.1">
    <property type="protein sequence ID" value="AT2G26410.1"/>
    <property type="gene ID" value="AT2G26410"/>
</dbReference>
<dbReference type="EnsemblPlants" id="AT2G26410.2">
    <property type="protein sequence ID" value="AT2G26410.2"/>
    <property type="gene ID" value="AT2G26410"/>
</dbReference>
<dbReference type="GeneID" id="817181"/>
<dbReference type="Gramene" id="AT2G26410.1">
    <property type="protein sequence ID" value="AT2G26410.1"/>
    <property type="gene ID" value="AT2G26410"/>
</dbReference>
<dbReference type="Gramene" id="AT2G26410.2">
    <property type="protein sequence ID" value="AT2G26410.2"/>
    <property type="gene ID" value="AT2G26410"/>
</dbReference>
<dbReference type="KEGG" id="ath:AT2G26410"/>
<dbReference type="Araport" id="AT2G26410"/>
<dbReference type="TAIR" id="AT2G26410">
    <property type="gene designation" value="IQD4"/>
</dbReference>
<dbReference type="eggNOG" id="ENOG502QUAG">
    <property type="taxonomic scope" value="Eukaryota"/>
</dbReference>
<dbReference type="HOGENOM" id="CLU_024547_3_1_1"/>
<dbReference type="InParanoid" id="F4IUJ7"/>
<dbReference type="OMA" id="PWDAESI"/>
<dbReference type="PRO" id="PR:F4IUJ7"/>
<dbReference type="Proteomes" id="UP000006548">
    <property type="component" value="Chromosome 2"/>
</dbReference>
<dbReference type="ExpressionAtlas" id="F4IUJ7">
    <property type="expression patterns" value="baseline and differential"/>
</dbReference>
<dbReference type="GO" id="GO:0005730">
    <property type="term" value="C:nucleolus"/>
    <property type="evidence" value="ECO:0000314"/>
    <property type="project" value="TAIR"/>
</dbReference>
<dbReference type="GO" id="GO:0005634">
    <property type="term" value="C:nucleus"/>
    <property type="evidence" value="ECO:0000314"/>
    <property type="project" value="TAIR"/>
</dbReference>
<dbReference type="GO" id="GO:0005516">
    <property type="term" value="F:calmodulin binding"/>
    <property type="evidence" value="ECO:0007669"/>
    <property type="project" value="UniProtKB-KW"/>
</dbReference>
<dbReference type="Gene3D" id="1.20.5.1190">
    <property type="entry name" value="iswi atpase"/>
    <property type="match status" value="1"/>
</dbReference>
<dbReference type="PANTHER" id="PTHR32295">
    <property type="entry name" value="IQ-DOMAIN 5-RELATED"/>
    <property type="match status" value="1"/>
</dbReference>
<dbReference type="PANTHER" id="PTHR32295:SF214">
    <property type="entry name" value="PROTEIN IQ-DOMAIN 4"/>
    <property type="match status" value="1"/>
</dbReference>
<dbReference type="PROSITE" id="PS50096">
    <property type="entry name" value="IQ"/>
    <property type="match status" value="1"/>
</dbReference>
<proteinExistence type="evidence at protein level"/>
<feature type="chain" id="PRO_0000453111" description="Protein IQ-DOMAIN 4">
    <location>
        <begin position="1"/>
        <end position="527"/>
    </location>
</feature>
<feature type="domain" description="IQ" evidence="2">
    <location>
        <begin position="147"/>
        <end position="175"/>
    </location>
</feature>
<feature type="region of interest" description="Disordered" evidence="4">
    <location>
        <begin position="13"/>
        <end position="90"/>
    </location>
</feature>
<feature type="region of interest" description="Calmodulin-binding" evidence="6">
    <location>
        <begin position="256"/>
        <end position="273"/>
    </location>
</feature>
<feature type="region of interest" description="Disordered" evidence="4">
    <location>
        <begin position="323"/>
        <end position="527"/>
    </location>
</feature>
<feature type="short sequence motif" description="Nuclear localization signal" evidence="3">
    <location>
        <begin position="478"/>
        <end position="485"/>
    </location>
</feature>
<feature type="compositionally biased region" description="Basic and acidic residues" evidence="4">
    <location>
        <begin position="17"/>
        <end position="26"/>
    </location>
</feature>
<feature type="compositionally biased region" description="Pro residues" evidence="4">
    <location>
        <begin position="63"/>
        <end position="90"/>
    </location>
</feature>
<feature type="compositionally biased region" description="Polar residues" evidence="4">
    <location>
        <begin position="335"/>
        <end position="360"/>
    </location>
</feature>
<feature type="compositionally biased region" description="Basic and acidic residues" evidence="4">
    <location>
        <begin position="361"/>
        <end position="370"/>
    </location>
</feature>
<feature type="compositionally biased region" description="Polar residues" evidence="4">
    <location>
        <begin position="399"/>
        <end position="422"/>
    </location>
</feature>
<feature type="compositionally biased region" description="Polar residues" evidence="4">
    <location>
        <begin position="437"/>
        <end position="455"/>
    </location>
</feature>
<feature type="compositionally biased region" description="Basic and acidic residues" evidence="4">
    <location>
        <begin position="471"/>
        <end position="481"/>
    </location>
</feature>
<sequence>MGKNWLTCVSVACLSPGKDKKNQKPEKPKRKWSFGKQKSRESFDFPLEETPPVDPSPSSVHRPYPPPPPLPDFAPQPLLPPPSPPPPPPAYTINTRIYGESKESKNRQALALASAVAAEAAVVAAHAAAEVIRLTTPSTPQIEESKEETAAIKIQNAYRCYTARRTLRALRGMARLKSLLQGKYVKRQMNAMLSSMQTLTRLQTQIQERRNRLSAENKTRHRLIQQKGHQKENHQNLVTAGNFDSSNKSKEQIVARSVNRKEASVRRERALAYAYSHQQTWRNSSKLPHQTLMDTNTTDWGWSWLERWMASRPWDAESIDDQVSVKSSLKRENSIKSSPARSKTQKSASQSSIQWPVNNDTKSRKIEVTNRRHSIGGGSSENAKDDESVGSSSSRRNSLDNTQTVKSKVSVETTSNVSNAQTVKPKANVGAKRNLDNTKTLKSKSSVGTTGNLANTEAVKSKVNVGTTSMPKKEVVADKKKPPQMVLPKKRLSSSTSLGKTKKLSDSDKATTGVANGEKKRRNGGSS</sequence>
<keyword id="KW-0112">Calmodulin-binding</keyword>
<keyword id="KW-0175">Coiled coil</keyword>
<keyword id="KW-0539">Nucleus</keyword>
<keyword id="KW-1185">Reference proteome</keyword>
<reference key="1">
    <citation type="journal article" date="1999" name="Nature">
        <title>Sequence and analysis of chromosome 2 of the plant Arabidopsis thaliana.</title>
        <authorList>
            <person name="Lin X."/>
            <person name="Kaul S."/>
            <person name="Rounsley S.D."/>
            <person name="Shea T.P."/>
            <person name="Benito M.-I."/>
            <person name="Town C.D."/>
            <person name="Fujii C.Y."/>
            <person name="Mason T.M."/>
            <person name="Bowman C.L."/>
            <person name="Barnstead M.E."/>
            <person name="Feldblyum T.V."/>
            <person name="Buell C.R."/>
            <person name="Ketchum K.A."/>
            <person name="Lee J.J."/>
            <person name="Ronning C.M."/>
            <person name="Koo H.L."/>
            <person name="Moffat K.S."/>
            <person name="Cronin L.A."/>
            <person name="Shen M."/>
            <person name="Pai G."/>
            <person name="Van Aken S."/>
            <person name="Umayam L."/>
            <person name="Tallon L.J."/>
            <person name="Gill J.E."/>
            <person name="Adams M.D."/>
            <person name="Carrera A.J."/>
            <person name="Creasy T.H."/>
            <person name="Goodman H.M."/>
            <person name="Somerville C.R."/>
            <person name="Copenhaver G.P."/>
            <person name="Preuss D."/>
            <person name="Nierman W.C."/>
            <person name="White O."/>
            <person name="Eisen J.A."/>
            <person name="Salzberg S.L."/>
            <person name="Fraser C.M."/>
            <person name="Venter J.C."/>
        </authorList>
    </citation>
    <scope>NUCLEOTIDE SEQUENCE [LARGE SCALE GENOMIC DNA]</scope>
    <source>
        <strain>cv. Columbia</strain>
    </source>
</reference>
<reference key="2">
    <citation type="journal article" date="2017" name="Plant J.">
        <title>Araport11: a complete reannotation of the Arabidopsis thaliana reference genome.</title>
        <authorList>
            <person name="Cheng C.Y."/>
            <person name="Krishnakumar V."/>
            <person name="Chan A.P."/>
            <person name="Thibaud-Nissen F."/>
            <person name="Schobel S."/>
            <person name="Town C.D."/>
        </authorList>
    </citation>
    <scope>GENOME REANNOTATION</scope>
    <source>
        <strain>cv. Columbia</strain>
    </source>
</reference>
<reference key="3">
    <citation type="journal article" date="2005" name="BMC Evol. Biol.">
        <title>Genome-wide comparative analysis of the IQD gene families in Arabidopsis thaliana and Oryza sativa.</title>
        <authorList>
            <person name="Abel S."/>
            <person name="Savchenko T."/>
            <person name="Levy M."/>
        </authorList>
    </citation>
    <scope>INTERACTION WITH CALMODULIN</scope>
    <scope>GENE FAMILY</scope>
    <scope>NOMENCLATURE</scope>
    <source>
        <strain>cv. Columbia</strain>
    </source>
</reference>
<reference key="4">
    <citation type="journal article" date="2005" name="Plant J.">
        <title>Arabidopsis IQD1, a novel calmodulin-binding nuclear protein, stimulates glucosinolate accumulation and plant defense.</title>
        <authorList>
            <person name="Levy M."/>
            <person name="Wang Q."/>
            <person name="Kaspi R."/>
            <person name="Parrella M.P."/>
            <person name="Abel S."/>
        </authorList>
    </citation>
    <scope>GENE FAMILY</scope>
</reference>
<reference key="5">
    <citation type="journal article" date="2017" name="Plant Physiol.">
        <title>The IQD family of calmodulin-binding proteins links calcium signaling to microtubules, membrane subdomains, and the nucleus.</title>
        <authorList>
            <person name="Buerstenbinder K."/>
            <person name="Moeller B."/>
            <person name="Ploetner R."/>
            <person name="Stamm G."/>
            <person name="Hause G."/>
            <person name="Mitra D."/>
            <person name="Abel S."/>
        </authorList>
    </citation>
    <scope>SUBCELLULAR LOCATION</scope>
    <source>
        <strain>cv. Columbia</strain>
    </source>
</reference>
<reference key="6">
    <citation type="journal article" date="2017" name="Plant Signal. Behav.">
        <title>Functions of IQD proteins as hubs in cellular calcium and auxin signaling: A toolbox for shape formation and tissue-specification in plants?</title>
        <authorList>
            <person name="Buerstenbinder K."/>
            <person name="Mitra D."/>
            <person name="Quegwer J."/>
        </authorList>
    </citation>
    <scope>REVIEW</scope>
</reference>
<name>IQD4_ARATH</name>
<protein>
    <recommendedName>
        <fullName evidence="6">Protein IQ-DOMAIN 4</fullName>
        <shortName evidence="6">AtIQD4</shortName>
    </recommendedName>
</protein>
<evidence type="ECO:0000250" key="1">
    <source>
        <dbReference type="UniProtKB" id="Q9SF32"/>
    </source>
</evidence>
<evidence type="ECO:0000255" key="2">
    <source>
        <dbReference type="PROSITE-ProRule" id="PRU00116"/>
    </source>
</evidence>
<evidence type="ECO:0000255" key="3">
    <source>
        <dbReference type="PROSITE-ProRule" id="PRU00768"/>
    </source>
</evidence>
<evidence type="ECO:0000256" key="4">
    <source>
        <dbReference type="SAM" id="MobiDB-lite"/>
    </source>
</evidence>
<evidence type="ECO:0000269" key="5">
    <source>
    </source>
</evidence>
<evidence type="ECO:0000303" key="6">
    <source>
    </source>
</evidence>
<evidence type="ECO:0000305" key="7"/>
<evidence type="ECO:0000312" key="8">
    <source>
        <dbReference type="Araport" id="AT2G26410"/>
    </source>
</evidence>
<evidence type="ECO:0000312" key="9">
    <source>
        <dbReference type="EMBL" id="AEC07834.1"/>
    </source>
</evidence>